<dbReference type="EC" id="1.18.6.1" evidence="1"/>
<dbReference type="EMBL" id="AP010904">
    <property type="protein sequence ID" value="BAH75547.1"/>
    <property type="molecule type" value="Genomic_DNA"/>
</dbReference>
<dbReference type="RefSeq" id="WP_015860737.1">
    <property type="nucleotide sequence ID" value="NC_012796.1"/>
</dbReference>
<dbReference type="SMR" id="C4XRK2"/>
<dbReference type="STRING" id="573370.DMR_20560"/>
<dbReference type="KEGG" id="dma:DMR_20560"/>
<dbReference type="eggNOG" id="COG1348">
    <property type="taxonomic scope" value="Bacteria"/>
</dbReference>
<dbReference type="HOGENOM" id="CLU_059373_0_0_7"/>
<dbReference type="OrthoDB" id="9778641at2"/>
<dbReference type="Proteomes" id="UP000009071">
    <property type="component" value="Chromosome"/>
</dbReference>
<dbReference type="GO" id="GO:0051539">
    <property type="term" value="F:4 iron, 4 sulfur cluster binding"/>
    <property type="evidence" value="ECO:0007669"/>
    <property type="project" value="UniProtKB-KW"/>
</dbReference>
<dbReference type="GO" id="GO:0005524">
    <property type="term" value="F:ATP binding"/>
    <property type="evidence" value="ECO:0007669"/>
    <property type="project" value="UniProtKB-UniRule"/>
</dbReference>
<dbReference type="GO" id="GO:0046872">
    <property type="term" value="F:metal ion binding"/>
    <property type="evidence" value="ECO:0007669"/>
    <property type="project" value="UniProtKB-KW"/>
</dbReference>
<dbReference type="GO" id="GO:0016163">
    <property type="term" value="F:nitrogenase activity"/>
    <property type="evidence" value="ECO:0007669"/>
    <property type="project" value="UniProtKB-UniRule"/>
</dbReference>
<dbReference type="GO" id="GO:0009399">
    <property type="term" value="P:nitrogen fixation"/>
    <property type="evidence" value="ECO:0007669"/>
    <property type="project" value="UniProtKB-UniRule"/>
</dbReference>
<dbReference type="CDD" id="cd02040">
    <property type="entry name" value="NifH"/>
    <property type="match status" value="1"/>
</dbReference>
<dbReference type="Gene3D" id="3.40.50.300">
    <property type="entry name" value="P-loop containing nucleotide triphosphate hydrolases"/>
    <property type="match status" value="1"/>
</dbReference>
<dbReference type="HAMAP" id="MF_00533">
    <property type="entry name" value="NifH"/>
    <property type="match status" value="1"/>
</dbReference>
<dbReference type="InterPro" id="IPR030655">
    <property type="entry name" value="NifH/chlL_CS"/>
</dbReference>
<dbReference type="InterPro" id="IPR000392">
    <property type="entry name" value="NifH/frxC"/>
</dbReference>
<dbReference type="InterPro" id="IPR005977">
    <property type="entry name" value="Nitrogenase_Fe_NifH"/>
</dbReference>
<dbReference type="InterPro" id="IPR027417">
    <property type="entry name" value="P-loop_NTPase"/>
</dbReference>
<dbReference type="NCBIfam" id="TIGR01287">
    <property type="entry name" value="nifH"/>
    <property type="match status" value="1"/>
</dbReference>
<dbReference type="PANTHER" id="PTHR42864">
    <property type="entry name" value="LIGHT-INDEPENDENT PROTOCHLOROPHYLLIDE REDUCTASE IRON-SULFUR ATP-BINDING PROTEIN"/>
    <property type="match status" value="1"/>
</dbReference>
<dbReference type="PANTHER" id="PTHR42864:SF2">
    <property type="entry name" value="LIGHT-INDEPENDENT PROTOCHLOROPHYLLIDE REDUCTASE IRON-SULFUR ATP-BINDING PROTEIN"/>
    <property type="match status" value="1"/>
</dbReference>
<dbReference type="Pfam" id="PF00142">
    <property type="entry name" value="Fer4_NifH"/>
    <property type="match status" value="1"/>
</dbReference>
<dbReference type="PIRSF" id="PIRSF000363">
    <property type="entry name" value="Nitrogenase_iron"/>
    <property type="match status" value="1"/>
</dbReference>
<dbReference type="PRINTS" id="PR00091">
    <property type="entry name" value="NITROGNASEII"/>
</dbReference>
<dbReference type="SUPFAM" id="SSF52540">
    <property type="entry name" value="P-loop containing nucleoside triphosphate hydrolases"/>
    <property type="match status" value="1"/>
</dbReference>
<dbReference type="PROSITE" id="PS00746">
    <property type="entry name" value="NIFH_FRXC_1"/>
    <property type="match status" value="1"/>
</dbReference>
<dbReference type="PROSITE" id="PS00692">
    <property type="entry name" value="NIFH_FRXC_2"/>
    <property type="match status" value="1"/>
</dbReference>
<dbReference type="PROSITE" id="PS51026">
    <property type="entry name" value="NIFH_FRXC_3"/>
    <property type="match status" value="1"/>
</dbReference>
<accession>C4XRK2</accession>
<proteinExistence type="inferred from homology"/>
<reference key="1">
    <citation type="journal article" date="2009" name="Genome Res.">
        <title>Whole genome sequence of Desulfovibrio magneticus strain RS-1 revealed common gene clusters in magnetotactic bacteria.</title>
        <authorList>
            <person name="Nakazawa H."/>
            <person name="Arakaki A."/>
            <person name="Narita-Yamada S."/>
            <person name="Yashiro I."/>
            <person name="Jinno K."/>
            <person name="Aoki N."/>
            <person name="Tsuruyama A."/>
            <person name="Okamura Y."/>
            <person name="Tanikawa S."/>
            <person name="Fujita N."/>
            <person name="Takeyama H."/>
            <person name="Matsunaga T."/>
        </authorList>
    </citation>
    <scope>NUCLEOTIDE SEQUENCE [LARGE SCALE GENOMIC DNA]</scope>
    <source>
        <strain>ATCC 700980 / DSM 13731 / RS-1</strain>
    </source>
</reference>
<protein>
    <recommendedName>
        <fullName evidence="1">Nitrogenase iron protein</fullName>
        <ecNumber evidence="1">1.18.6.1</ecNumber>
    </recommendedName>
    <alternativeName>
        <fullName evidence="1">Nitrogenase Fe protein</fullName>
    </alternativeName>
    <alternativeName>
        <fullName evidence="1">Nitrogenase component II</fullName>
    </alternativeName>
    <alternativeName>
        <fullName evidence="1">Nitrogenase reductase</fullName>
    </alternativeName>
</protein>
<keyword id="KW-0004">4Fe-4S</keyword>
<keyword id="KW-0013">ADP-ribosylation</keyword>
<keyword id="KW-0067">ATP-binding</keyword>
<keyword id="KW-0408">Iron</keyword>
<keyword id="KW-0411">Iron-sulfur</keyword>
<keyword id="KW-0479">Metal-binding</keyword>
<keyword id="KW-0535">Nitrogen fixation</keyword>
<keyword id="KW-0547">Nucleotide-binding</keyword>
<keyword id="KW-0560">Oxidoreductase</keyword>
<gene>
    <name evidence="1" type="primary">nifH</name>
    <name type="ordered locus">DMR_20560</name>
</gene>
<name>NIFH_SOLM1</name>
<sequence>MRKIAIYGKGGIGKSTTTQNTVAGLAEMGKKVMVVGCDPKADSTRLLLHGLAQKTVLDTLREEGEDVELDDILKEGYGGTMCTESGGPEPGVGCAGRGIITSINLLEQLGAYEEDKKLDYVFYDVLGDVVCGGFAMPIRDGKAEEIYIVCSGEMMAMYAANNICKGIVKYADTGGVRLGGIICNSRKVDFEKEMIEELCRQIGTQMIHFMPRENQVQRAEINRKTVIDYSPEHAQADEYRALAKKIDENKMLVIPKPLEIAQLEKLLVDFGIAN</sequence>
<comment type="function">
    <text evidence="1">The key enzymatic reactions in nitrogen fixation are catalyzed by the nitrogenase complex, which has 2 components: the iron protein and the molybdenum-iron protein.</text>
</comment>
<comment type="catalytic activity">
    <reaction evidence="1">
        <text>N2 + 8 reduced [2Fe-2S]-[ferredoxin] + 16 ATP + 16 H2O = H2 + 8 oxidized [2Fe-2S]-[ferredoxin] + 2 NH4(+) + 16 ADP + 16 phosphate + 6 H(+)</text>
        <dbReference type="Rhea" id="RHEA:21448"/>
        <dbReference type="Rhea" id="RHEA-COMP:10000"/>
        <dbReference type="Rhea" id="RHEA-COMP:10001"/>
        <dbReference type="ChEBI" id="CHEBI:15377"/>
        <dbReference type="ChEBI" id="CHEBI:15378"/>
        <dbReference type="ChEBI" id="CHEBI:17997"/>
        <dbReference type="ChEBI" id="CHEBI:18276"/>
        <dbReference type="ChEBI" id="CHEBI:28938"/>
        <dbReference type="ChEBI" id="CHEBI:30616"/>
        <dbReference type="ChEBI" id="CHEBI:33737"/>
        <dbReference type="ChEBI" id="CHEBI:33738"/>
        <dbReference type="ChEBI" id="CHEBI:43474"/>
        <dbReference type="ChEBI" id="CHEBI:456216"/>
        <dbReference type="EC" id="1.18.6.1"/>
    </reaction>
</comment>
<comment type="cofactor">
    <cofactor evidence="1">
        <name>[4Fe-4S] cluster</name>
        <dbReference type="ChEBI" id="CHEBI:49883"/>
    </cofactor>
    <text evidence="1">Binds 1 [4Fe-4S] cluster per dimer.</text>
</comment>
<comment type="subunit">
    <text evidence="1">Homodimer.</text>
</comment>
<comment type="PTM">
    <text evidence="1">The reversible ADP-ribosylation of Arg-97 inactivates the nitrogenase reductase and regulates nitrogenase activity.</text>
</comment>
<comment type="similarity">
    <text evidence="1">Belongs to the NifH/BchL/ChlL family.</text>
</comment>
<feature type="chain" id="PRO_1000211867" description="Nitrogenase iron protein">
    <location>
        <begin position="1"/>
        <end position="274"/>
    </location>
</feature>
<feature type="binding site" evidence="1">
    <location>
        <begin position="8"/>
        <end position="15"/>
    </location>
    <ligand>
        <name>ATP</name>
        <dbReference type="ChEBI" id="CHEBI:30616"/>
    </ligand>
</feature>
<feature type="binding site" evidence="1">
    <location>
        <position position="94"/>
    </location>
    <ligand>
        <name>[4Fe-4S] cluster</name>
        <dbReference type="ChEBI" id="CHEBI:49883"/>
        <note>ligand shared between dimeric partners</note>
    </ligand>
</feature>
<feature type="binding site" evidence="1">
    <location>
        <position position="131"/>
    </location>
    <ligand>
        <name>[4Fe-4S] cluster</name>
        <dbReference type="ChEBI" id="CHEBI:49883"/>
        <note>ligand shared between dimeric partners</note>
    </ligand>
</feature>
<feature type="modified residue" description="ADP-ribosylarginine; by dinitrogenase reductase ADP-ribosyltransferase" evidence="1">
    <location>
        <position position="97"/>
    </location>
</feature>
<organism>
    <name type="scientific">Solidesulfovibrio magneticus (strain ATCC 700980 / DSM 13731 / RS-1)</name>
    <name type="common">Desulfovibrio magneticus</name>
    <dbReference type="NCBI Taxonomy" id="573370"/>
    <lineage>
        <taxon>Bacteria</taxon>
        <taxon>Pseudomonadati</taxon>
        <taxon>Thermodesulfobacteriota</taxon>
        <taxon>Desulfovibrionia</taxon>
        <taxon>Desulfovibrionales</taxon>
        <taxon>Desulfovibrionaceae</taxon>
        <taxon>Solidesulfovibrio</taxon>
    </lineage>
</organism>
<evidence type="ECO:0000255" key="1">
    <source>
        <dbReference type="HAMAP-Rule" id="MF_00533"/>
    </source>
</evidence>